<dbReference type="EC" id="5.4.2.10" evidence="1"/>
<dbReference type="EMBL" id="AJ938182">
    <property type="protein sequence ID" value="CAI81730.1"/>
    <property type="molecule type" value="Genomic_DNA"/>
</dbReference>
<dbReference type="RefSeq" id="WP_000521496.1">
    <property type="nucleotide sequence ID" value="NC_007622.1"/>
</dbReference>
<dbReference type="SMR" id="Q2YYE6"/>
<dbReference type="KEGG" id="sab:SAB2041c"/>
<dbReference type="HOGENOM" id="CLU_016950_7_0_9"/>
<dbReference type="GO" id="GO:0005829">
    <property type="term" value="C:cytosol"/>
    <property type="evidence" value="ECO:0007669"/>
    <property type="project" value="TreeGrafter"/>
</dbReference>
<dbReference type="GO" id="GO:0000287">
    <property type="term" value="F:magnesium ion binding"/>
    <property type="evidence" value="ECO:0007669"/>
    <property type="project" value="UniProtKB-UniRule"/>
</dbReference>
<dbReference type="GO" id="GO:0008966">
    <property type="term" value="F:phosphoglucosamine mutase activity"/>
    <property type="evidence" value="ECO:0007669"/>
    <property type="project" value="UniProtKB-UniRule"/>
</dbReference>
<dbReference type="GO" id="GO:0004615">
    <property type="term" value="F:phosphomannomutase activity"/>
    <property type="evidence" value="ECO:0007669"/>
    <property type="project" value="TreeGrafter"/>
</dbReference>
<dbReference type="GO" id="GO:0005975">
    <property type="term" value="P:carbohydrate metabolic process"/>
    <property type="evidence" value="ECO:0007669"/>
    <property type="project" value="InterPro"/>
</dbReference>
<dbReference type="GO" id="GO:0009252">
    <property type="term" value="P:peptidoglycan biosynthetic process"/>
    <property type="evidence" value="ECO:0007669"/>
    <property type="project" value="TreeGrafter"/>
</dbReference>
<dbReference type="GO" id="GO:0006048">
    <property type="term" value="P:UDP-N-acetylglucosamine biosynthetic process"/>
    <property type="evidence" value="ECO:0007669"/>
    <property type="project" value="TreeGrafter"/>
</dbReference>
<dbReference type="CDD" id="cd05802">
    <property type="entry name" value="GlmM"/>
    <property type="match status" value="1"/>
</dbReference>
<dbReference type="FunFam" id="3.30.310.50:FF:000001">
    <property type="entry name" value="Phosphoglucosamine mutase"/>
    <property type="match status" value="1"/>
</dbReference>
<dbReference type="FunFam" id="3.40.120.10:FF:000001">
    <property type="entry name" value="Phosphoglucosamine mutase"/>
    <property type="match status" value="1"/>
</dbReference>
<dbReference type="FunFam" id="3.40.120.10:FF:000002">
    <property type="entry name" value="Phosphoglucosamine mutase"/>
    <property type="match status" value="1"/>
</dbReference>
<dbReference type="Gene3D" id="3.40.120.10">
    <property type="entry name" value="Alpha-D-Glucose-1,6-Bisphosphate, subunit A, domain 3"/>
    <property type="match status" value="3"/>
</dbReference>
<dbReference type="Gene3D" id="3.30.310.50">
    <property type="entry name" value="Alpha-D-phosphohexomutase, C-terminal domain"/>
    <property type="match status" value="1"/>
</dbReference>
<dbReference type="HAMAP" id="MF_01554_B">
    <property type="entry name" value="GlmM_B"/>
    <property type="match status" value="1"/>
</dbReference>
<dbReference type="InterPro" id="IPR005844">
    <property type="entry name" value="A-D-PHexomutase_a/b/a-I"/>
</dbReference>
<dbReference type="InterPro" id="IPR016055">
    <property type="entry name" value="A-D-PHexomutase_a/b/a-I/II/III"/>
</dbReference>
<dbReference type="InterPro" id="IPR005845">
    <property type="entry name" value="A-D-PHexomutase_a/b/a-II"/>
</dbReference>
<dbReference type="InterPro" id="IPR005846">
    <property type="entry name" value="A-D-PHexomutase_a/b/a-III"/>
</dbReference>
<dbReference type="InterPro" id="IPR005843">
    <property type="entry name" value="A-D-PHexomutase_C"/>
</dbReference>
<dbReference type="InterPro" id="IPR036900">
    <property type="entry name" value="A-D-PHexomutase_C_sf"/>
</dbReference>
<dbReference type="InterPro" id="IPR016066">
    <property type="entry name" value="A-D-PHexomutase_CS"/>
</dbReference>
<dbReference type="InterPro" id="IPR005841">
    <property type="entry name" value="Alpha-D-phosphohexomutase_SF"/>
</dbReference>
<dbReference type="InterPro" id="IPR006352">
    <property type="entry name" value="GlmM_bact"/>
</dbReference>
<dbReference type="InterPro" id="IPR050060">
    <property type="entry name" value="Phosphoglucosamine_mutase"/>
</dbReference>
<dbReference type="NCBIfam" id="TIGR01455">
    <property type="entry name" value="glmM"/>
    <property type="match status" value="1"/>
</dbReference>
<dbReference type="NCBIfam" id="NF008139">
    <property type="entry name" value="PRK10887.1"/>
    <property type="match status" value="1"/>
</dbReference>
<dbReference type="PANTHER" id="PTHR42946:SF1">
    <property type="entry name" value="PHOSPHOGLUCOMUTASE (ALPHA-D-GLUCOSE-1,6-BISPHOSPHATE-DEPENDENT)"/>
    <property type="match status" value="1"/>
</dbReference>
<dbReference type="PANTHER" id="PTHR42946">
    <property type="entry name" value="PHOSPHOHEXOSE MUTASE"/>
    <property type="match status" value="1"/>
</dbReference>
<dbReference type="Pfam" id="PF02878">
    <property type="entry name" value="PGM_PMM_I"/>
    <property type="match status" value="1"/>
</dbReference>
<dbReference type="Pfam" id="PF02879">
    <property type="entry name" value="PGM_PMM_II"/>
    <property type="match status" value="1"/>
</dbReference>
<dbReference type="Pfam" id="PF02880">
    <property type="entry name" value="PGM_PMM_III"/>
    <property type="match status" value="1"/>
</dbReference>
<dbReference type="Pfam" id="PF00408">
    <property type="entry name" value="PGM_PMM_IV"/>
    <property type="match status" value="1"/>
</dbReference>
<dbReference type="PRINTS" id="PR00509">
    <property type="entry name" value="PGMPMM"/>
</dbReference>
<dbReference type="SUPFAM" id="SSF55957">
    <property type="entry name" value="Phosphoglucomutase, C-terminal domain"/>
    <property type="match status" value="1"/>
</dbReference>
<dbReference type="SUPFAM" id="SSF53738">
    <property type="entry name" value="Phosphoglucomutase, first 3 domains"/>
    <property type="match status" value="3"/>
</dbReference>
<dbReference type="PROSITE" id="PS00710">
    <property type="entry name" value="PGM_PMM"/>
    <property type="match status" value="1"/>
</dbReference>
<organism>
    <name type="scientific">Staphylococcus aureus (strain bovine RF122 / ET3-1)</name>
    <dbReference type="NCBI Taxonomy" id="273036"/>
    <lineage>
        <taxon>Bacteria</taxon>
        <taxon>Bacillati</taxon>
        <taxon>Bacillota</taxon>
        <taxon>Bacilli</taxon>
        <taxon>Bacillales</taxon>
        <taxon>Staphylococcaceae</taxon>
        <taxon>Staphylococcus</taxon>
    </lineage>
</organism>
<evidence type="ECO:0000255" key="1">
    <source>
        <dbReference type="HAMAP-Rule" id="MF_01554"/>
    </source>
</evidence>
<keyword id="KW-0413">Isomerase</keyword>
<keyword id="KW-0460">Magnesium</keyword>
<keyword id="KW-0479">Metal-binding</keyword>
<keyword id="KW-0597">Phosphoprotein</keyword>
<proteinExistence type="inferred from homology"/>
<protein>
    <recommendedName>
        <fullName evidence="1">Phosphoglucosamine mutase</fullName>
        <ecNumber evidence="1">5.4.2.10</ecNumber>
    </recommendedName>
</protein>
<sequence length="451" mass="49310">MGKYFGTDGVRGVANQELTPELAFKLGRYGGYVLAHNKGEKHPRVLVGRDTRVSGEMLESALIAGLISIGAEVMRLGIISTPGVAYLTRDMGAELGVMISASHNPVADNGIKFFGSDGFKLSDEQENEIEALLDQENPELPRPVGNDIVHYSDYFEGAQKYLSYLKSTVDVNFEGLKIVLDGANGSTSSLAPFLFGDLEADTETIGCSPDGYNINEKCGSTHPEKLAEKVVETESDFGLAFDGDGDRIIAVDENGQIVDGDQIMFIIGQEMHKNQELNNDMIVSTVMSNLGFYKALEQEGIKSNKTKVGDRYVVEEMRRGNYNLGGEQSGHIVMMDYNTTGDGLLTGIQLASVIKMTGKSLSELAGQMKKYPQSLINVRVTDKYRVEENVDVKEVMTKVEVEMNGEGRILVRPSGTEPLVRVMVEAATDEDAERYAQQIADVVQDKMGLDK</sequence>
<feature type="chain" id="PRO_0000301384" description="Phosphoglucosamine mutase">
    <location>
        <begin position="1"/>
        <end position="451"/>
    </location>
</feature>
<feature type="active site" description="Phosphoserine intermediate" evidence="1">
    <location>
        <position position="102"/>
    </location>
</feature>
<feature type="binding site" description="via phosphate group" evidence="1">
    <location>
        <position position="102"/>
    </location>
    <ligand>
        <name>Mg(2+)</name>
        <dbReference type="ChEBI" id="CHEBI:18420"/>
    </ligand>
</feature>
<feature type="binding site" evidence="1">
    <location>
        <position position="242"/>
    </location>
    <ligand>
        <name>Mg(2+)</name>
        <dbReference type="ChEBI" id="CHEBI:18420"/>
    </ligand>
</feature>
<feature type="binding site" evidence="1">
    <location>
        <position position="244"/>
    </location>
    <ligand>
        <name>Mg(2+)</name>
        <dbReference type="ChEBI" id="CHEBI:18420"/>
    </ligand>
</feature>
<feature type="binding site" evidence="1">
    <location>
        <position position="246"/>
    </location>
    <ligand>
        <name>Mg(2+)</name>
        <dbReference type="ChEBI" id="CHEBI:18420"/>
    </ligand>
</feature>
<feature type="modified residue" description="Phosphoserine" evidence="1">
    <location>
        <position position="102"/>
    </location>
</feature>
<reference key="1">
    <citation type="journal article" date="2007" name="PLoS ONE">
        <title>Molecular correlates of host specialization in Staphylococcus aureus.</title>
        <authorList>
            <person name="Herron-Olson L."/>
            <person name="Fitzgerald J.R."/>
            <person name="Musser J.M."/>
            <person name="Kapur V."/>
        </authorList>
    </citation>
    <scope>NUCLEOTIDE SEQUENCE [LARGE SCALE GENOMIC DNA]</scope>
    <source>
        <strain>bovine RF122 / ET3-1</strain>
    </source>
</reference>
<name>GLMM_STAAB</name>
<comment type="function">
    <text evidence="1">Catalyzes the conversion of glucosamine-6-phosphate to glucosamine-1-phosphate.</text>
</comment>
<comment type="catalytic activity">
    <reaction evidence="1">
        <text>alpha-D-glucosamine 1-phosphate = D-glucosamine 6-phosphate</text>
        <dbReference type="Rhea" id="RHEA:23424"/>
        <dbReference type="ChEBI" id="CHEBI:58516"/>
        <dbReference type="ChEBI" id="CHEBI:58725"/>
        <dbReference type="EC" id="5.4.2.10"/>
    </reaction>
</comment>
<comment type="cofactor">
    <cofactor evidence="1">
        <name>Mg(2+)</name>
        <dbReference type="ChEBI" id="CHEBI:18420"/>
    </cofactor>
    <text evidence="1">Binds 1 Mg(2+) ion per subunit.</text>
</comment>
<comment type="PTM">
    <text evidence="1">Activated by phosphorylation.</text>
</comment>
<comment type="similarity">
    <text evidence="1">Belongs to the phosphohexose mutase family.</text>
</comment>
<gene>
    <name evidence="1" type="primary">glmM</name>
    <name type="ordered locus">SAB2041c</name>
</gene>
<accession>Q2YYE6</accession>